<keyword id="KW-0244">Early protein</keyword>
<keyword id="KW-1185">Reference proteome</keyword>
<sequence length="67" mass="7928">MSSLKYANTDITIKMVIITPKVLEDDSLSESSIHFANNRFHFDLYYIKPWAFVSILYLFLCFLYNII</sequence>
<organism>
    <name type="scientific">Fowlpox virus (strain NVSL)</name>
    <name type="common">FPV</name>
    <dbReference type="NCBI Taxonomy" id="928301"/>
    <lineage>
        <taxon>Viruses</taxon>
        <taxon>Varidnaviria</taxon>
        <taxon>Bamfordvirae</taxon>
        <taxon>Nucleocytoviricota</taxon>
        <taxon>Pokkesviricetes</taxon>
        <taxon>Chitovirales</taxon>
        <taxon>Poxviridae</taxon>
        <taxon>Chordopoxvirinae</taxon>
        <taxon>Avipoxvirus</taxon>
        <taxon>Fowlpox virus</taxon>
    </lineage>
</organism>
<organismHost>
    <name type="scientific">Vertebrata</name>
    <dbReference type="NCBI Taxonomy" id="7742"/>
</organismHost>
<proteinExistence type="predicted"/>
<reference key="1">
    <citation type="journal article" date="1988" name="J. Gen. Virol.">
        <title>Sequence analysis of an 11.2 kilobase, near-terminal, BamHI fragment of fowlpox virus.</title>
        <authorList>
            <person name="Tomley F."/>
            <person name="Binns M."/>
            <person name="Campbell J."/>
            <person name="Boursnell M.E.G."/>
        </authorList>
    </citation>
    <scope>NUCLEOTIDE SEQUENCE [GENOMIC DNA]</scope>
    <source>
        <strain>FP-9 / Isolate HP-438</strain>
    </source>
</reference>
<reference key="2">
    <citation type="journal article" date="2000" name="J. Virol.">
        <title>The genome of fowlpox virus.</title>
        <authorList>
            <person name="Afonso C.L."/>
            <person name="Tulman E.R."/>
            <person name="Lu Z."/>
            <person name="Zsak L."/>
            <person name="Kutish G.F."/>
            <person name="Rock D.L."/>
        </authorList>
    </citation>
    <scope>NUCLEOTIDE SEQUENCE [LARGE SCALE GENOMIC DNA]</scope>
</reference>
<name>V237_FOWPN</name>
<feature type="chain" id="PRO_0000099733" description="Uncharacterized protein FPV237">
    <location>
        <begin position="1"/>
        <end position="67"/>
    </location>
</feature>
<dbReference type="EMBL" id="D00295">
    <property type="protein sequence ID" value="BAA00204.1"/>
    <property type="molecule type" value="Genomic_DNA"/>
</dbReference>
<dbReference type="EMBL" id="AF198100">
    <property type="protein sequence ID" value="AAF44581.1"/>
    <property type="molecule type" value="Genomic_DNA"/>
</dbReference>
<dbReference type="PIR" id="I29963">
    <property type="entry name" value="WMVZF9"/>
</dbReference>
<dbReference type="RefSeq" id="NP_039200.1">
    <property type="nucleotide sequence ID" value="NC_002188.1"/>
</dbReference>
<dbReference type="GeneID" id="1486809"/>
<dbReference type="KEGG" id="vg:1486809"/>
<dbReference type="Proteomes" id="UP000008597">
    <property type="component" value="Segment"/>
</dbReference>
<accession>P14366</accession>
<protein>
    <recommendedName>
        <fullName>Uncharacterized protein FPV237</fullName>
    </recommendedName>
    <alternativeName>
        <fullName>BamHI-ORF9</fullName>
    </alternativeName>
</protein>
<gene>
    <name type="ordered locus">FPV237</name>
</gene>